<feature type="chain" id="PRO_0000222214" description="Replication-associated protein">
    <location>
        <begin position="1"/>
        <end position="361"/>
    </location>
</feature>
<feature type="domain" description="CRESS-DNA virus Rep endonuclease" evidence="2">
    <location>
        <begin position="8"/>
        <end position="116"/>
    </location>
</feature>
<feature type="region of interest" description="Binding to RBR1" evidence="1">
    <location>
        <begin position="143"/>
        <end position="153"/>
    </location>
</feature>
<feature type="region of interest" description="Oligomerization" evidence="1">
    <location>
        <begin position="156"/>
        <end position="176"/>
    </location>
</feature>
<feature type="short sequence motif" description="RCR-1" evidence="2">
    <location>
        <begin position="15"/>
        <end position="18"/>
    </location>
</feature>
<feature type="short sequence motif" description="RCR-2" evidence="2">
    <location>
        <begin position="57"/>
        <end position="59"/>
    </location>
</feature>
<feature type="short sequence motif" description="RCR-3" evidence="2">
    <location>
        <begin position="103"/>
        <end position="106"/>
    </location>
</feature>
<feature type="active site" description="For DNA cleavage activity" evidence="2">
    <location>
        <position position="103"/>
    </location>
</feature>
<feature type="binding site" evidence="2">
    <location>
        <position position="49"/>
    </location>
    <ligand>
        <name>a divalent metal cation</name>
        <dbReference type="ChEBI" id="CHEBI:60240"/>
    </ligand>
</feature>
<feature type="binding site" evidence="2">
    <location>
        <position position="57"/>
    </location>
    <ligand>
        <name>a divalent metal cation</name>
        <dbReference type="ChEBI" id="CHEBI:60240"/>
    </ligand>
</feature>
<feature type="binding site" evidence="2">
    <location>
        <position position="59"/>
    </location>
    <ligand>
        <name>a divalent metal cation</name>
        <dbReference type="ChEBI" id="CHEBI:60240"/>
    </ligand>
</feature>
<feature type="binding site" evidence="2">
    <location>
        <position position="107"/>
    </location>
    <ligand>
        <name>a divalent metal cation</name>
        <dbReference type="ChEBI" id="CHEBI:60240"/>
    </ligand>
</feature>
<feature type="binding site" evidence="1">
    <location>
        <begin position="222"/>
        <end position="229"/>
    </location>
    <ligand>
        <name>ATP</name>
        <dbReference type="ChEBI" id="CHEBI:30616"/>
    </ligand>
</feature>
<reference key="1">
    <citation type="journal article" date="1992" name="J. Gen. Virol.">
        <title>The nucleotide sequence of tomato mottle virus, a new geminivirus isolated from tomatoes in Florida.</title>
        <authorList>
            <person name="Abouzid A.M."/>
            <person name="Polston J.E."/>
            <person name="Hiebert E."/>
        </authorList>
    </citation>
    <scope>NUCLEOTIDE SEQUENCE [GENOMIC DNA]</scope>
</reference>
<name>REP_TMOV</name>
<comment type="function">
    <text evidence="1">Essential for the replication of viral ssDNA. The closed circular ssDNA genome is first converted to a superhelical dsDNA. Rep binds a specific region at the genome origin of replication. It introduces an endonucleolytic nick within the conserved sequence 5'-TAATATTAC-3' in the intergenic region of the genome present in all geminiviruses, thereby initiating the rolling circle replication (RCR). Following cleavage, binds covalently to the 5'-phosphate of DNA as a tyrosyl ester. The cleavage gives rise to a free 3'-OH that serves as a primer for the cellular DNA polymerase. The polymerase synthesizes the (+) strand DNA by rolling circle mechanism. After one round of replication, a Rep-catalyzed nucleotidyl transfer reaction releases a circular single-stranded virus genome, thereby terminating the replication. Displays origin-specific DNA cleavage, nucleotidyl transferase, ATPase and helicase activities (By similarity).</text>
</comment>
<comment type="cofactor">
    <cofactor evidence="2">
        <name>Mg(2+)</name>
        <dbReference type="ChEBI" id="CHEBI:18420"/>
    </cofactor>
    <cofactor evidence="2">
        <name>Mn(2+)</name>
        <dbReference type="ChEBI" id="CHEBI:29035"/>
    </cofactor>
    <text evidence="2">Divalent metal cations, possibly Mg(2+) or Mn(2+).</text>
</comment>
<comment type="subunit">
    <text evidence="1">Homooligomer. Interacts with the replication enhancer. protein (REn). Interacts with host retinoblastoma-related protein 1 (RBR1), and may thereby induce the transcription of host replicative enzymes even if the cell is not dividing anymore. Interacts with host PCNA. Interacts with host SCE1 protein (By similarity).</text>
</comment>
<comment type="subcellular location">
    <subcellularLocation>
        <location evidence="1">Host nucleus</location>
    </subcellularLocation>
</comment>
<comment type="domain">
    <text evidence="1">There are 3 rolling circle replication (RCR) motifs. RCR-2 is probably involved in metal coordination. RCR-3 is required for phosphodiester bond cleavage for initiation of RCR (By similarity).</text>
</comment>
<comment type="similarity">
    <text evidence="3">Belongs to the geminiviridae Rep protein family.</text>
</comment>
<accession>Q06657</accession>
<keyword id="KW-0067">ATP-binding</keyword>
<keyword id="KW-0190">Covalent protein-DNA linkage</keyword>
<keyword id="KW-0235">DNA replication</keyword>
<keyword id="KW-0238">DNA-binding</keyword>
<keyword id="KW-0255">Endonuclease</keyword>
<keyword id="KW-0347">Helicase</keyword>
<keyword id="KW-1048">Host nucleus</keyword>
<keyword id="KW-0945">Host-virus interaction</keyword>
<keyword id="KW-0378">Hydrolase</keyword>
<keyword id="KW-0479">Metal-binding</keyword>
<keyword id="KW-0511">Multifunctional enzyme</keyword>
<keyword id="KW-0540">Nuclease</keyword>
<keyword id="KW-0547">Nucleotide-binding</keyword>
<keyword id="KW-0548">Nucleotidyltransferase</keyword>
<keyword id="KW-0808">Transferase</keyword>
<evidence type="ECO:0000250" key="1"/>
<evidence type="ECO:0000255" key="2">
    <source>
        <dbReference type="PROSITE-ProRule" id="PRU01364"/>
    </source>
</evidence>
<evidence type="ECO:0000305" key="3"/>
<organismHost>
    <name type="scientific">Nicotiana tabacum</name>
    <name type="common">Common tobacco</name>
    <dbReference type="NCBI Taxonomy" id="4097"/>
</organismHost>
<gene>
    <name type="ORF">AC1</name>
    <name type="ORF">AL1</name>
</gene>
<organism>
    <name type="scientific">Tomato mottle virus (isolate Florida)</name>
    <name type="common">ToMoV</name>
    <dbReference type="NCBI Taxonomy" id="223359"/>
    <lineage>
        <taxon>Viruses</taxon>
        <taxon>Monodnaviria</taxon>
        <taxon>Shotokuvirae</taxon>
        <taxon>Cressdnaviricota</taxon>
        <taxon>Repensiviricetes</taxon>
        <taxon>Geplafuvirales</taxon>
        <taxon>Geminiviridae</taxon>
        <taxon>Begomovirus</taxon>
        <taxon>Tomato mottle virus</taxon>
    </lineage>
</organism>
<sequence length="361" mass="40516">MPPPKKFRVQSKNYFLTYPQCSLSKEEALSQLQNLNTPVNKKFIKICRELHENGEPHLHVLVQFEGKYQCTNNRFFDLVSPTRSAHFHPNIQGAKSSSDVKSYIDKDGDTIEWGDFQIDGRSARGGQQSANDSYAKALNAGSVQSALAVLREEQPKDFVLQNHNIRSNLERIFAKAPEPWVPPFQVSSFTNVPDEMQEWADNYFGTGDAAPPDRPVSIIVEGDSRTGKTMWARALGPHNYLSGHLDFNGRVFSNDVQYNVIDDIAPHYLKLKHWKELLGAQKDWQSNCKYGKPVQIKGGIPAIVLCNPGEGASYKEFLDKAENTGLKNWTIKNAIFITLTAPLYQESTQASQETGNQKAQG</sequence>
<dbReference type="EC" id="2.7.7.-"/>
<dbReference type="EC" id="3.1.21.-"/>
<dbReference type="EMBL" id="L14460">
    <property type="protein sequence ID" value="AAC32414.1"/>
    <property type="molecule type" value="Genomic_DNA"/>
</dbReference>
<dbReference type="PIR" id="JQ1870">
    <property type="entry name" value="JQ1870"/>
</dbReference>
<dbReference type="RefSeq" id="NP_047249.1">
    <property type="nucleotide sequence ID" value="NC_001938.1"/>
</dbReference>
<dbReference type="SMR" id="Q06657"/>
<dbReference type="GeneID" id="956409"/>
<dbReference type="KEGG" id="vg:956409"/>
<dbReference type="Proteomes" id="UP000008249">
    <property type="component" value="Genome"/>
</dbReference>
<dbReference type="GO" id="GO:0042025">
    <property type="term" value="C:host cell nucleus"/>
    <property type="evidence" value="ECO:0007669"/>
    <property type="project" value="UniProtKB-SubCell"/>
</dbReference>
<dbReference type="GO" id="GO:0005524">
    <property type="term" value="F:ATP binding"/>
    <property type="evidence" value="ECO:0007669"/>
    <property type="project" value="UniProtKB-KW"/>
</dbReference>
<dbReference type="GO" id="GO:0003677">
    <property type="term" value="F:DNA binding"/>
    <property type="evidence" value="ECO:0007669"/>
    <property type="project" value="UniProtKB-KW"/>
</dbReference>
<dbReference type="GO" id="GO:0016888">
    <property type="term" value="F:endodeoxyribonuclease activity, producing 5'-phosphomonoesters"/>
    <property type="evidence" value="ECO:0007669"/>
    <property type="project" value="InterPro"/>
</dbReference>
<dbReference type="GO" id="GO:0004386">
    <property type="term" value="F:helicase activity"/>
    <property type="evidence" value="ECO:0007669"/>
    <property type="project" value="UniProtKB-KW"/>
</dbReference>
<dbReference type="GO" id="GO:0046872">
    <property type="term" value="F:metal ion binding"/>
    <property type="evidence" value="ECO:0007669"/>
    <property type="project" value="UniProtKB-KW"/>
</dbReference>
<dbReference type="GO" id="GO:0016779">
    <property type="term" value="F:nucleotidyltransferase activity"/>
    <property type="evidence" value="ECO:0007669"/>
    <property type="project" value="UniProtKB-KW"/>
</dbReference>
<dbReference type="GO" id="GO:0005198">
    <property type="term" value="F:structural molecule activity"/>
    <property type="evidence" value="ECO:0007669"/>
    <property type="project" value="InterPro"/>
</dbReference>
<dbReference type="GO" id="GO:0006260">
    <property type="term" value="P:DNA replication"/>
    <property type="evidence" value="ECO:0007669"/>
    <property type="project" value="UniProtKB-KW"/>
</dbReference>
<dbReference type="FunFam" id="3.40.1310.20:FF:000001">
    <property type="entry name" value="Replication-associated protein"/>
    <property type="match status" value="1"/>
</dbReference>
<dbReference type="Gene3D" id="3.40.1310.20">
    <property type="match status" value="1"/>
</dbReference>
<dbReference type="InterPro" id="IPR049912">
    <property type="entry name" value="CRESS_DNA_REP"/>
</dbReference>
<dbReference type="InterPro" id="IPR001301">
    <property type="entry name" value="Gemini_AL1_CLV"/>
</dbReference>
<dbReference type="InterPro" id="IPR001191">
    <property type="entry name" value="Gemini_AL1_REP"/>
</dbReference>
<dbReference type="InterPro" id="IPR022692">
    <property type="entry name" value="Gemini_AL1_REP_central"/>
</dbReference>
<dbReference type="Pfam" id="PF00799">
    <property type="entry name" value="Gemini_AL1"/>
    <property type="match status" value="1"/>
</dbReference>
<dbReference type="Pfam" id="PF08283">
    <property type="entry name" value="Gemini_AL1_M"/>
    <property type="match status" value="1"/>
</dbReference>
<dbReference type="PRINTS" id="PR00227">
    <property type="entry name" value="GEMCOATAL1"/>
</dbReference>
<dbReference type="PRINTS" id="PR00228">
    <property type="entry name" value="GEMCOATCLVL1"/>
</dbReference>
<dbReference type="SUPFAM" id="SSF55464">
    <property type="entry name" value="Origin of replication-binding domain, RBD-like"/>
    <property type="match status" value="1"/>
</dbReference>
<dbReference type="PROSITE" id="PS52020">
    <property type="entry name" value="CRESS_DNA_REP"/>
    <property type="match status" value="1"/>
</dbReference>
<proteinExistence type="inferred from homology"/>
<protein>
    <recommendedName>
        <fullName>Replication-associated protein</fullName>
        <shortName>Rep</shortName>
        <ecNumber>2.7.7.-</ecNumber>
        <ecNumber>3.1.21.-</ecNumber>
    </recommendedName>
    <alternativeName>
        <fullName>Protein AC1</fullName>
    </alternativeName>
    <alternativeName>
        <fullName>Protein AL1</fullName>
    </alternativeName>
</protein>